<protein>
    <recommendedName>
        <fullName evidence="1">DNA ligase</fullName>
        <ecNumber evidence="1">6.5.1.2</ecNumber>
    </recommendedName>
    <alternativeName>
        <fullName evidence="1">Polydeoxyribonucleotide synthase [NAD(+)]</fullName>
    </alternativeName>
</protein>
<keyword id="KW-0227">DNA damage</keyword>
<keyword id="KW-0234">DNA repair</keyword>
<keyword id="KW-0235">DNA replication</keyword>
<keyword id="KW-0436">Ligase</keyword>
<keyword id="KW-0460">Magnesium</keyword>
<keyword id="KW-0464">Manganese</keyword>
<keyword id="KW-0479">Metal-binding</keyword>
<keyword id="KW-0520">NAD</keyword>
<keyword id="KW-0862">Zinc</keyword>
<gene>
    <name evidence="1" type="primary">ligA</name>
    <name type="ordered locus">HPAG1_0596</name>
</gene>
<name>DNLJ_HELPH</name>
<evidence type="ECO:0000255" key="1">
    <source>
        <dbReference type="HAMAP-Rule" id="MF_01588"/>
    </source>
</evidence>
<comment type="function">
    <text evidence="1">DNA ligase that catalyzes the formation of phosphodiester linkages between 5'-phosphoryl and 3'-hydroxyl groups in double-stranded DNA using NAD as a coenzyme and as the energy source for the reaction. It is essential for DNA replication and repair of damaged DNA.</text>
</comment>
<comment type="catalytic activity">
    <reaction evidence="1">
        <text>NAD(+) + (deoxyribonucleotide)n-3'-hydroxyl + 5'-phospho-(deoxyribonucleotide)m = (deoxyribonucleotide)n+m + AMP + beta-nicotinamide D-nucleotide.</text>
        <dbReference type="EC" id="6.5.1.2"/>
    </reaction>
</comment>
<comment type="cofactor">
    <cofactor evidence="1">
        <name>Mg(2+)</name>
        <dbReference type="ChEBI" id="CHEBI:18420"/>
    </cofactor>
    <cofactor evidence="1">
        <name>Mn(2+)</name>
        <dbReference type="ChEBI" id="CHEBI:29035"/>
    </cofactor>
</comment>
<comment type="similarity">
    <text evidence="1">Belongs to the NAD-dependent DNA ligase family. LigA subfamily.</text>
</comment>
<accession>Q1CTQ9</accession>
<proteinExistence type="inferred from homology"/>
<dbReference type="EC" id="6.5.1.2" evidence="1"/>
<dbReference type="EMBL" id="CP000241">
    <property type="protein sequence ID" value="ABF84663.1"/>
    <property type="molecule type" value="Genomic_DNA"/>
</dbReference>
<dbReference type="RefSeq" id="WP_000597555.1">
    <property type="nucleotide sequence ID" value="NC_008086.1"/>
</dbReference>
<dbReference type="SMR" id="Q1CTQ9"/>
<dbReference type="KEGG" id="hpa:HPAG1_0596"/>
<dbReference type="HOGENOM" id="CLU_007764_2_1_7"/>
<dbReference type="GO" id="GO:0005829">
    <property type="term" value="C:cytosol"/>
    <property type="evidence" value="ECO:0007669"/>
    <property type="project" value="TreeGrafter"/>
</dbReference>
<dbReference type="GO" id="GO:0003677">
    <property type="term" value="F:DNA binding"/>
    <property type="evidence" value="ECO:0007669"/>
    <property type="project" value="InterPro"/>
</dbReference>
<dbReference type="GO" id="GO:0003911">
    <property type="term" value="F:DNA ligase (NAD+) activity"/>
    <property type="evidence" value="ECO:0007669"/>
    <property type="project" value="UniProtKB-UniRule"/>
</dbReference>
<dbReference type="GO" id="GO:0046872">
    <property type="term" value="F:metal ion binding"/>
    <property type="evidence" value="ECO:0007669"/>
    <property type="project" value="UniProtKB-KW"/>
</dbReference>
<dbReference type="GO" id="GO:0006281">
    <property type="term" value="P:DNA repair"/>
    <property type="evidence" value="ECO:0007669"/>
    <property type="project" value="UniProtKB-KW"/>
</dbReference>
<dbReference type="GO" id="GO:0006260">
    <property type="term" value="P:DNA replication"/>
    <property type="evidence" value="ECO:0007669"/>
    <property type="project" value="UniProtKB-KW"/>
</dbReference>
<dbReference type="CDD" id="cd17748">
    <property type="entry name" value="BRCT_DNA_ligase_like"/>
    <property type="match status" value="1"/>
</dbReference>
<dbReference type="CDD" id="cd00114">
    <property type="entry name" value="LIGANc"/>
    <property type="match status" value="1"/>
</dbReference>
<dbReference type="FunFam" id="1.10.150.20:FF:000007">
    <property type="entry name" value="DNA ligase"/>
    <property type="match status" value="1"/>
</dbReference>
<dbReference type="FunFam" id="2.40.50.140:FF:000012">
    <property type="entry name" value="DNA ligase"/>
    <property type="match status" value="1"/>
</dbReference>
<dbReference type="FunFam" id="3.30.470.30:FF:000034">
    <property type="entry name" value="DNA ligase"/>
    <property type="match status" value="1"/>
</dbReference>
<dbReference type="FunFam" id="3.40.50.10190:FF:000069">
    <property type="entry name" value="DNA ligase"/>
    <property type="match status" value="1"/>
</dbReference>
<dbReference type="Gene3D" id="1.10.150.20">
    <property type="entry name" value="5' to 3' exonuclease, C-terminal subdomain"/>
    <property type="match status" value="2"/>
</dbReference>
<dbReference type="Gene3D" id="3.40.50.10190">
    <property type="entry name" value="BRCT domain"/>
    <property type="match status" value="1"/>
</dbReference>
<dbReference type="Gene3D" id="3.30.470.30">
    <property type="entry name" value="DNA ligase/mRNA capping enzyme"/>
    <property type="match status" value="1"/>
</dbReference>
<dbReference type="Gene3D" id="1.10.287.610">
    <property type="entry name" value="Helix hairpin bin"/>
    <property type="match status" value="1"/>
</dbReference>
<dbReference type="Gene3D" id="2.40.50.140">
    <property type="entry name" value="Nucleic acid-binding proteins"/>
    <property type="match status" value="1"/>
</dbReference>
<dbReference type="HAMAP" id="MF_01588">
    <property type="entry name" value="DNA_ligase_A"/>
    <property type="match status" value="1"/>
</dbReference>
<dbReference type="InterPro" id="IPR001357">
    <property type="entry name" value="BRCT_dom"/>
</dbReference>
<dbReference type="InterPro" id="IPR036420">
    <property type="entry name" value="BRCT_dom_sf"/>
</dbReference>
<dbReference type="InterPro" id="IPR001679">
    <property type="entry name" value="DNA_ligase"/>
</dbReference>
<dbReference type="InterPro" id="IPR018239">
    <property type="entry name" value="DNA_ligase_AS"/>
</dbReference>
<dbReference type="InterPro" id="IPR033136">
    <property type="entry name" value="DNA_ligase_CS"/>
</dbReference>
<dbReference type="InterPro" id="IPR013839">
    <property type="entry name" value="DNAligase_adenylation"/>
</dbReference>
<dbReference type="InterPro" id="IPR013840">
    <property type="entry name" value="DNAligase_N"/>
</dbReference>
<dbReference type="InterPro" id="IPR003583">
    <property type="entry name" value="Hlx-hairpin-Hlx_DNA-bd_motif"/>
</dbReference>
<dbReference type="InterPro" id="IPR012340">
    <property type="entry name" value="NA-bd_OB-fold"/>
</dbReference>
<dbReference type="InterPro" id="IPR004150">
    <property type="entry name" value="NAD_DNA_ligase_OB"/>
</dbReference>
<dbReference type="InterPro" id="IPR010994">
    <property type="entry name" value="RuvA_2-like"/>
</dbReference>
<dbReference type="NCBIfam" id="TIGR00575">
    <property type="entry name" value="dnlj"/>
    <property type="match status" value="1"/>
</dbReference>
<dbReference type="NCBIfam" id="NF005932">
    <property type="entry name" value="PRK07956.1"/>
    <property type="match status" value="1"/>
</dbReference>
<dbReference type="PANTHER" id="PTHR23389">
    <property type="entry name" value="CHROMOSOME TRANSMISSION FIDELITY FACTOR 18"/>
    <property type="match status" value="1"/>
</dbReference>
<dbReference type="PANTHER" id="PTHR23389:SF9">
    <property type="entry name" value="DNA LIGASE"/>
    <property type="match status" value="1"/>
</dbReference>
<dbReference type="Pfam" id="PF00533">
    <property type="entry name" value="BRCT"/>
    <property type="match status" value="1"/>
</dbReference>
<dbReference type="Pfam" id="PF01653">
    <property type="entry name" value="DNA_ligase_aden"/>
    <property type="match status" value="1"/>
</dbReference>
<dbReference type="Pfam" id="PF03120">
    <property type="entry name" value="DNA_ligase_OB"/>
    <property type="match status" value="1"/>
</dbReference>
<dbReference type="PIRSF" id="PIRSF001604">
    <property type="entry name" value="LigA"/>
    <property type="match status" value="1"/>
</dbReference>
<dbReference type="SMART" id="SM00292">
    <property type="entry name" value="BRCT"/>
    <property type="match status" value="1"/>
</dbReference>
<dbReference type="SMART" id="SM00278">
    <property type="entry name" value="HhH1"/>
    <property type="match status" value="3"/>
</dbReference>
<dbReference type="SMART" id="SM00532">
    <property type="entry name" value="LIGANc"/>
    <property type="match status" value="1"/>
</dbReference>
<dbReference type="SUPFAM" id="SSF52113">
    <property type="entry name" value="BRCT domain"/>
    <property type="match status" value="1"/>
</dbReference>
<dbReference type="SUPFAM" id="SSF56091">
    <property type="entry name" value="DNA ligase/mRNA capping enzyme, catalytic domain"/>
    <property type="match status" value="1"/>
</dbReference>
<dbReference type="SUPFAM" id="SSF50249">
    <property type="entry name" value="Nucleic acid-binding proteins"/>
    <property type="match status" value="1"/>
</dbReference>
<dbReference type="SUPFAM" id="SSF47781">
    <property type="entry name" value="RuvA domain 2-like"/>
    <property type="match status" value="1"/>
</dbReference>
<dbReference type="PROSITE" id="PS50172">
    <property type="entry name" value="BRCT"/>
    <property type="match status" value="1"/>
</dbReference>
<dbReference type="PROSITE" id="PS01055">
    <property type="entry name" value="DNA_LIGASE_N1"/>
    <property type="match status" value="1"/>
</dbReference>
<dbReference type="PROSITE" id="PS01056">
    <property type="entry name" value="DNA_LIGASE_N2"/>
    <property type="match status" value="1"/>
</dbReference>
<sequence length="656" mass="73978">MIKSQKEYLERIAYLNTLSHHYYNLDDPIVSDAVYDELYQELKAYEEKNPSHIQANSPTQKVGATATNPFNKNPHLMRMWSLDDVFNQSELQAWLQRILKAYPSASFVCSPKLDGVSLNLLYHHGKLISATTRGNGLEGELVSANAKHIANIPHAIAYKGEIEIRGEVIISKKDFDALNKERLNANEPLFANPRNAASGSLRQLDSEITKKRKLQFIPWGVGKHSLNFLSFKECLDFIVSLGFSAIQYLSLNKNHQEIEENYHTLIREREGFFALLDGMVIVVNELNIQKELGYTQKSPKFACAYKFPALEKHTKIIGVINQVGRSGAITPVALLEPVEIAGAMINRATLHNYSEIEKKNIMLNDRVVVIRSGDVIPKIIKPLESYRDGSQHKIERPKVCPICSYELLCEEIFTYCQNLNCPARLKESLIHFASKDALNIQGLGDKVIEQLFEEKLIVNALDLYALKLEDLMRLDKFKIKKAQNLLDAIQKSKNPPLWRLINALGIEHIGKGASKTLAKYGLNVLEKSEAEFLEMEGFGVEMARSLVNFYASNQEFIRSLFELLNPRNSDMAEEKQKSSSVFNNKTIVLTGTLSKPRQEYAQMLENLGAKISSSVSAKTNFLIVGENAGSKLALAQKHGVSVLNEEELLKRLKELD</sequence>
<organism>
    <name type="scientific">Helicobacter pylori (strain HPAG1)</name>
    <dbReference type="NCBI Taxonomy" id="357544"/>
    <lineage>
        <taxon>Bacteria</taxon>
        <taxon>Pseudomonadati</taxon>
        <taxon>Campylobacterota</taxon>
        <taxon>Epsilonproteobacteria</taxon>
        <taxon>Campylobacterales</taxon>
        <taxon>Helicobacteraceae</taxon>
        <taxon>Helicobacter</taxon>
    </lineage>
</organism>
<reference key="1">
    <citation type="journal article" date="2006" name="Proc. Natl. Acad. Sci. U.S.A.">
        <title>The complete genome sequence of a chronic atrophic gastritis Helicobacter pylori strain: evolution during disease progression.</title>
        <authorList>
            <person name="Oh J.D."/>
            <person name="Kling-Baeckhed H."/>
            <person name="Giannakis M."/>
            <person name="Xu J."/>
            <person name="Fulton R.S."/>
            <person name="Fulton L.A."/>
            <person name="Cordum H.S."/>
            <person name="Wang C."/>
            <person name="Elliott G."/>
            <person name="Edwards J."/>
            <person name="Mardis E.R."/>
            <person name="Engstrand L.G."/>
            <person name="Gordon J.I."/>
        </authorList>
    </citation>
    <scope>NUCLEOTIDE SEQUENCE [LARGE SCALE GENOMIC DNA]</scope>
    <source>
        <strain>HPAG1</strain>
    </source>
</reference>
<feature type="chain" id="PRO_0000313264" description="DNA ligase">
    <location>
        <begin position="1"/>
        <end position="656"/>
    </location>
</feature>
<feature type="domain" description="BRCT" evidence="1">
    <location>
        <begin position="577"/>
        <end position="656"/>
    </location>
</feature>
<feature type="active site" description="N6-AMP-lysine intermediate" evidence="1">
    <location>
        <position position="112"/>
    </location>
</feature>
<feature type="binding site" evidence="1">
    <location>
        <begin position="32"/>
        <end position="36"/>
    </location>
    <ligand>
        <name>NAD(+)</name>
        <dbReference type="ChEBI" id="CHEBI:57540"/>
    </ligand>
</feature>
<feature type="binding site" evidence="1">
    <location>
        <begin position="81"/>
        <end position="82"/>
    </location>
    <ligand>
        <name>NAD(+)</name>
        <dbReference type="ChEBI" id="CHEBI:57540"/>
    </ligand>
</feature>
<feature type="binding site" evidence="1">
    <location>
        <position position="133"/>
    </location>
    <ligand>
        <name>NAD(+)</name>
        <dbReference type="ChEBI" id="CHEBI:57540"/>
    </ligand>
</feature>
<feature type="binding site" evidence="1">
    <location>
        <position position="167"/>
    </location>
    <ligand>
        <name>NAD(+)</name>
        <dbReference type="ChEBI" id="CHEBI:57540"/>
    </ligand>
</feature>
<feature type="binding site" evidence="1">
    <location>
        <position position="306"/>
    </location>
    <ligand>
        <name>NAD(+)</name>
        <dbReference type="ChEBI" id="CHEBI:57540"/>
    </ligand>
</feature>
<feature type="binding site" evidence="1">
    <location>
        <position position="400"/>
    </location>
    <ligand>
        <name>Zn(2+)</name>
        <dbReference type="ChEBI" id="CHEBI:29105"/>
    </ligand>
</feature>
<feature type="binding site" evidence="1">
    <location>
        <position position="403"/>
    </location>
    <ligand>
        <name>Zn(2+)</name>
        <dbReference type="ChEBI" id="CHEBI:29105"/>
    </ligand>
</feature>
<feature type="binding site" evidence="1">
    <location>
        <position position="416"/>
    </location>
    <ligand>
        <name>Zn(2+)</name>
        <dbReference type="ChEBI" id="CHEBI:29105"/>
    </ligand>
</feature>
<feature type="binding site" evidence="1">
    <location>
        <position position="421"/>
    </location>
    <ligand>
        <name>Zn(2+)</name>
        <dbReference type="ChEBI" id="CHEBI:29105"/>
    </ligand>
</feature>